<accession>Q65SH2</accession>
<feature type="chain" id="PRO_1000018724" description="Phosphoribosylaminoimidazole-succinocarboxamide synthase">
    <location>
        <begin position="1"/>
        <end position="286"/>
    </location>
</feature>
<sequence>MAELSLKKIYSGKVRDLYEIDDKRMLMVASDRLSAFDVILEDPIPRKGEILTQISNFWFKKLAHIMPNHFTGDTVYDVLPKEEADLVKNRAVVVKRLKPIKIESIVRGYLTGSGLKDYKQTGTICGLQLPQGLVEASKLPEPIFTPSSKEEVGDHDINISYAECERQIGKELAAQVRDAAIALYKEAAAYALTKGIIICDTKFEFGLDENGTLTLMDEVLTPDSSRFWSVDTYREGTNPPSFDKQFVRDWLEQSGWNKQPPAPKVPADVIQKTVDKYQEALDLLTK</sequence>
<evidence type="ECO:0000255" key="1">
    <source>
        <dbReference type="HAMAP-Rule" id="MF_00137"/>
    </source>
</evidence>
<gene>
    <name evidence="1" type="primary">purC</name>
    <name type="ordered locus">MS1481</name>
</gene>
<reference key="1">
    <citation type="journal article" date="2004" name="Nat. Biotechnol.">
        <title>The genome sequence of the capnophilic rumen bacterium Mannheimia succiniciproducens.</title>
        <authorList>
            <person name="Hong S.H."/>
            <person name="Kim J.S."/>
            <person name="Lee S.Y."/>
            <person name="In Y.H."/>
            <person name="Choi S.S."/>
            <person name="Rih J.-K."/>
            <person name="Kim C.H."/>
            <person name="Jeong H."/>
            <person name="Hur C.G."/>
            <person name="Kim J.J."/>
        </authorList>
    </citation>
    <scope>NUCLEOTIDE SEQUENCE [LARGE SCALE GENOMIC DNA]</scope>
    <source>
        <strain>KCTC 0769BP / MBEL55E</strain>
    </source>
</reference>
<comment type="catalytic activity">
    <reaction evidence="1">
        <text>5-amino-1-(5-phospho-D-ribosyl)imidazole-4-carboxylate + L-aspartate + ATP = (2S)-2-[5-amino-1-(5-phospho-beta-D-ribosyl)imidazole-4-carboxamido]succinate + ADP + phosphate + 2 H(+)</text>
        <dbReference type="Rhea" id="RHEA:22628"/>
        <dbReference type="ChEBI" id="CHEBI:15378"/>
        <dbReference type="ChEBI" id="CHEBI:29991"/>
        <dbReference type="ChEBI" id="CHEBI:30616"/>
        <dbReference type="ChEBI" id="CHEBI:43474"/>
        <dbReference type="ChEBI" id="CHEBI:58443"/>
        <dbReference type="ChEBI" id="CHEBI:77657"/>
        <dbReference type="ChEBI" id="CHEBI:456216"/>
        <dbReference type="EC" id="6.3.2.6"/>
    </reaction>
</comment>
<comment type="pathway">
    <text evidence="1">Purine metabolism; IMP biosynthesis via de novo pathway; 5-amino-1-(5-phospho-D-ribosyl)imidazole-4-carboxamide from 5-amino-1-(5-phospho-D-ribosyl)imidazole-4-carboxylate: step 1/2.</text>
</comment>
<comment type="similarity">
    <text evidence="1">Belongs to the SAICAR synthetase family.</text>
</comment>
<proteinExistence type="inferred from homology"/>
<keyword id="KW-0067">ATP-binding</keyword>
<keyword id="KW-0436">Ligase</keyword>
<keyword id="KW-0547">Nucleotide-binding</keyword>
<keyword id="KW-0658">Purine biosynthesis</keyword>
<name>PUR7_MANSM</name>
<organism>
    <name type="scientific">Mannheimia succiniciproducens (strain KCTC 0769BP / MBEL55E)</name>
    <dbReference type="NCBI Taxonomy" id="221988"/>
    <lineage>
        <taxon>Bacteria</taxon>
        <taxon>Pseudomonadati</taxon>
        <taxon>Pseudomonadota</taxon>
        <taxon>Gammaproteobacteria</taxon>
        <taxon>Pasteurellales</taxon>
        <taxon>Pasteurellaceae</taxon>
        <taxon>Basfia</taxon>
    </lineage>
</organism>
<protein>
    <recommendedName>
        <fullName evidence="1">Phosphoribosylaminoimidazole-succinocarboxamide synthase</fullName>
        <ecNumber evidence="1">6.3.2.6</ecNumber>
    </recommendedName>
    <alternativeName>
        <fullName evidence="1">SAICAR synthetase</fullName>
    </alternativeName>
</protein>
<dbReference type="EC" id="6.3.2.6" evidence="1"/>
<dbReference type="EMBL" id="AE016827">
    <property type="protein sequence ID" value="AAU38088.1"/>
    <property type="molecule type" value="Genomic_DNA"/>
</dbReference>
<dbReference type="RefSeq" id="WP_011200654.1">
    <property type="nucleotide sequence ID" value="NC_006300.1"/>
</dbReference>
<dbReference type="SMR" id="Q65SH2"/>
<dbReference type="STRING" id="221988.MS1481"/>
<dbReference type="KEGG" id="msu:MS1481"/>
<dbReference type="eggNOG" id="COG0152">
    <property type="taxonomic scope" value="Bacteria"/>
</dbReference>
<dbReference type="HOGENOM" id="CLU_045637_0_0_6"/>
<dbReference type="OrthoDB" id="9801549at2"/>
<dbReference type="UniPathway" id="UPA00074">
    <property type="reaction ID" value="UER00131"/>
</dbReference>
<dbReference type="Proteomes" id="UP000000607">
    <property type="component" value="Chromosome"/>
</dbReference>
<dbReference type="GO" id="GO:0005737">
    <property type="term" value="C:cytoplasm"/>
    <property type="evidence" value="ECO:0007669"/>
    <property type="project" value="TreeGrafter"/>
</dbReference>
<dbReference type="GO" id="GO:0005524">
    <property type="term" value="F:ATP binding"/>
    <property type="evidence" value="ECO:0007669"/>
    <property type="project" value="UniProtKB-KW"/>
</dbReference>
<dbReference type="GO" id="GO:0004639">
    <property type="term" value="F:phosphoribosylaminoimidazolesuccinocarboxamide synthase activity"/>
    <property type="evidence" value="ECO:0007669"/>
    <property type="project" value="UniProtKB-UniRule"/>
</dbReference>
<dbReference type="GO" id="GO:0006189">
    <property type="term" value="P:'de novo' IMP biosynthetic process"/>
    <property type="evidence" value="ECO:0007669"/>
    <property type="project" value="UniProtKB-UniRule"/>
</dbReference>
<dbReference type="CDD" id="cd01414">
    <property type="entry name" value="SAICAR_synt_Sc"/>
    <property type="match status" value="1"/>
</dbReference>
<dbReference type="FunFam" id="3.30.200.20:FF:000365">
    <property type="entry name" value="Phosphoribosylaminoimidazole-succinocarboxamide synthase"/>
    <property type="match status" value="1"/>
</dbReference>
<dbReference type="FunFam" id="3.30.470.20:FF:000015">
    <property type="entry name" value="Phosphoribosylaminoimidazole-succinocarboxamide synthase"/>
    <property type="match status" value="1"/>
</dbReference>
<dbReference type="Gene3D" id="3.30.470.20">
    <property type="entry name" value="ATP-grasp fold, B domain"/>
    <property type="match status" value="1"/>
</dbReference>
<dbReference type="Gene3D" id="3.30.200.20">
    <property type="entry name" value="Phosphorylase Kinase, domain 1"/>
    <property type="match status" value="1"/>
</dbReference>
<dbReference type="HAMAP" id="MF_00137">
    <property type="entry name" value="SAICAR_synth"/>
    <property type="match status" value="1"/>
</dbReference>
<dbReference type="InterPro" id="IPR028923">
    <property type="entry name" value="SAICAR_synt/ADE2_N"/>
</dbReference>
<dbReference type="InterPro" id="IPR001636">
    <property type="entry name" value="SAICAR_synth"/>
</dbReference>
<dbReference type="InterPro" id="IPR018236">
    <property type="entry name" value="SAICAR_synthetase_CS"/>
</dbReference>
<dbReference type="NCBIfam" id="NF010568">
    <property type="entry name" value="PRK13961.1"/>
    <property type="match status" value="1"/>
</dbReference>
<dbReference type="NCBIfam" id="TIGR00081">
    <property type="entry name" value="purC"/>
    <property type="match status" value="1"/>
</dbReference>
<dbReference type="PANTHER" id="PTHR43700">
    <property type="entry name" value="PHOSPHORIBOSYLAMINOIMIDAZOLE-SUCCINOCARBOXAMIDE SYNTHASE"/>
    <property type="match status" value="1"/>
</dbReference>
<dbReference type="PANTHER" id="PTHR43700:SF1">
    <property type="entry name" value="PHOSPHORIBOSYLAMINOIMIDAZOLE-SUCCINOCARBOXAMIDE SYNTHASE"/>
    <property type="match status" value="1"/>
</dbReference>
<dbReference type="Pfam" id="PF01259">
    <property type="entry name" value="SAICAR_synt"/>
    <property type="match status" value="1"/>
</dbReference>
<dbReference type="SUPFAM" id="SSF56104">
    <property type="entry name" value="SAICAR synthase-like"/>
    <property type="match status" value="1"/>
</dbReference>
<dbReference type="PROSITE" id="PS01057">
    <property type="entry name" value="SAICAR_SYNTHETASE_1"/>
    <property type="match status" value="1"/>
</dbReference>
<dbReference type="PROSITE" id="PS01058">
    <property type="entry name" value="SAICAR_SYNTHETASE_2"/>
    <property type="match status" value="1"/>
</dbReference>